<gene>
    <name evidence="1" type="primary">groES</name>
    <name evidence="1" type="synonym">groS</name>
    <name type="ordered locus">Ssed_0641</name>
</gene>
<comment type="function">
    <text evidence="1">Together with the chaperonin GroEL, plays an essential role in assisting protein folding. The GroEL-GroES system forms a nano-cage that allows encapsulation of the non-native substrate proteins and provides a physical environment optimized to promote and accelerate protein folding. GroES binds to the apical surface of the GroEL ring, thereby capping the opening of the GroEL channel.</text>
</comment>
<comment type="subunit">
    <text evidence="1">Heptamer of 7 subunits arranged in a ring. Interacts with the chaperonin GroEL.</text>
</comment>
<comment type="subcellular location">
    <subcellularLocation>
        <location evidence="1">Cytoplasm</location>
    </subcellularLocation>
</comment>
<comment type="similarity">
    <text evidence="1">Belongs to the GroES chaperonin family.</text>
</comment>
<feature type="chain" id="PRO_1000082394" description="Co-chaperonin GroES">
    <location>
        <begin position="1"/>
        <end position="96"/>
    </location>
</feature>
<reference key="1">
    <citation type="submission" date="2007-08" db="EMBL/GenBank/DDBJ databases">
        <title>Complete sequence of Shewanella sediminis HAW-EB3.</title>
        <authorList>
            <consortium name="US DOE Joint Genome Institute"/>
            <person name="Copeland A."/>
            <person name="Lucas S."/>
            <person name="Lapidus A."/>
            <person name="Barry K."/>
            <person name="Glavina del Rio T."/>
            <person name="Dalin E."/>
            <person name="Tice H."/>
            <person name="Pitluck S."/>
            <person name="Chertkov O."/>
            <person name="Brettin T."/>
            <person name="Bruce D."/>
            <person name="Detter J.C."/>
            <person name="Han C."/>
            <person name="Schmutz J."/>
            <person name="Larimer F."/>
            <person name="Land M."/>
            <person name="Hauser L."/>
            <person name="Kyrpides N."/>
            <person name="Kim E."/>
            <person name="Zhao J.-S."/>
            <person name="Richardson P."/>
        </authorList>
    </citation>
    <scope>NUCLEOTIDE SEQUENCE [LARGE SCALE GENOMIC DNA]</scope>
    <source>
        <strain>HAW-EB3</strain>
    </source>
</reference>
<dbReference type="EMBL" id="CP000821">
    <property type="protein sequence ID" value="ABV35253.1"/>
    <property type="molecule type" value="Genomic_DNA"/>
</dbReference>
<dbReference type="RefSeq" id="WP_012140990.1">
    <property type="nucleotide sequence ID" value="NC_009831.1"/>
</dbReference>
<dbReference type="SMR" id="A8FQY0"/>
<dbReference type="STRING" id="425104.Ssed_0641"/>
<dbReference type="KEGG" id="sse:Ssed_0641"/>
<dbReference type="eggNOG" id="COG0234">
    <property type="taxonomic scope" value="Bacteria"/>
</dbReference>
<dbReference type="HOGENOM" id="CLU_132825_1_1_6"/>
<dbReference type="OrthoDB" id="9806791at2"/>
<dbReference type="Proteomes" id="UP000002015">
    <property type="component" value="Chromosome"/>
</dbReference>
<dbReference type="GO" id="GO:0005737">
    <property type="term" value="C:cytoplasm"/>
    <property type="evidence" value="ECO:0007669"/>
    <property type="project" value="UniProtKB-SubCell"/>
</dbReference>
<dbReference type="GO" id="GO:0005524">
    <property type="term" value="F:ATP binding"/>
    <property type="evidence" value="ECO:0007669"/>
    <property type="project" value="InterPro"/>
</dbReference>
<dbReference type="GO" id="GO:0046872">
    <property type="term" value="F:metal ion binding"/>
    <property type="evidence" value="ECO:0007669"/>
    <property type="project" value="TreeGrafter"/>
</dbReference>
<dbReference type="GO" id="GO:0044183">
    <property type="term" value="F:protein folding chaperone"/>
    <property type="evidence" value="ECO:0007669"/>
    <property type="project" value="InterPro"/>
</dbReference>
<dbReference type="GO" id="GO:0051087">
    <property type="term" value="F:protein-folding chaperone binding"/>
    <property type="evidence" value="ECO:0007669"/>
    <property type="project" value="TreeGrafter"/>
</dbReference>
<dbReference type="GO" id="GO:0051082">
    <property type="term" value="F:unfolded protein binding"/>
    <property type="evidence" value="ECO:0007669"/>
    <property type="project" value="TreeGrafter"/>
</dbReference>
<dbReference type="GO" id="GO:0051085">
    <property type="term" value="P:chaperone cofactor-dependent protein refolding"/>
    <property type="evidence" value="ECO:0007669"/>
    <property type="project" value="TreeGrafter"/>
</dbReference>
<dbReference type="CDD" id="cd00320">
    <property type="entry name" value="cpn10"/>
    <property type="match status" value="1"/>
</dbReference>
<dbReference type="FunFam" id="2.30.33.40:FF:000001">
    <property type="entry name" value="10 kDa chaperonin"/>
    <property type="match status" value="1"/>
</dbReference>
<dbReference type="Gene3D" id="2.30.33.40">
    <property type="entry name" value="GroES chaperonin"/>
    <property type="match status" value="1"/>
</dbReference>
<dbReference type="HAMAP" id="MF_00580">
    <property type="entry name" value="CH10"/>
    <property type="match status" value="1"/>
</dbReference>
<dbReference type="InterPro" id="IPR020818">
    <property type="entry name" value="Chaperonin_GroES"/>
</dbReference>
<dbReference type="InterPro" id="IPR037124">
    <property type="entry name" value="Chaperonin_GroES_sf"/>
</dbReference>
<dbReference type="InterPro" id="IPR018369">
    <property type="entry name" value="Chaprnonin_Cpn10_CS"/>
</dbReference>
<dbReference type="InterPro" id="IPR011032">
    <property type="entry name" value="GroES-like_sf"/>
</dbReference>
<dbReference type="NCBIfam" id="NF001526">
    <property type="entry name" value="PRK00364.1-1"/>
    <property type="match status" value="1"/>
</dbReference>
<dbReference type="NCBIfam" id="NF001527">
    <property type="entry name" value="PRK00364.1-2"/>
    <property type="match status" value="1"/>
</dbReference>
<dbReference type="NCBIfam" id="NF001531">
    <property type="entry name" value="PRK00364.2-2"/>
    <property type="match status" value="1"/>
</dbReference>
<dbReference type="PANTHER" id="PTHR10772">
    <property type="entry name" value="10 KDA HEAT SHOCK PROTEIN"/>
    <property type="match status" value="1"/>
</dbReference>
<dbReference type="PANTHER" id="PTHR10772:SF58">
    <property type="entry name" value="CO-CHAPERONIN GROES"/>
    <property type="match status" value="1"/>
</dbReference>
<dbReference type="Pfam" id="PF00166">
    <property type="entry name" value="Cpn10"/>
    <property type="match status" value="1"/>
</dbReference>
<dbReference type="PRINTS" id="PR00297">
    <property type="entry name" value="CHAPERONIN10"/>
</dbReference>
<dbReference type="SMART" id="SM00883">
    <property type="entry name" value="Cpn10"/>
    <property type="match status" value="1"/>
</dbReference>
<dbReference type="SUPFAM" id="SSF50129">
    <property type="entry name" value="GroES-like"/>
    <property type="match status" value="1"/>
</dbReference>
<dbReference type="PROSITE" id="PS00681">
    <property type="entry name" value="CHAPERONINS_CPN10"/>
    <property type="match status" value="1"/>
</dbReference>
<protein>
    <recommendedName>
        <fullName evidence="1">Co-chaperonin GroES</fullName>
    </recommendedName>
    <alternativeName>
        <fullName evidence="1">10 kDa chaperonin</fullName>
    </alternativeName>
    <alternativeName>
        <fullName evidence="1">Chaperonin-10</fullName>
        <shortName evidence="1">Cpn10</shortName>
    </alternativeName>
</protein>
<organism>
    <name type="scientific">Shewanella sediminis (strain HAW-EB3)</name>
    <dbReference type="NCBI Taxonomy" id="425104"/>
    <lineage>
        <taxon>Bacteria</taxon>
        <taxon>Pseudomonadati</taxon>
        <taxon>Pseudomonadota</taxon>
        <taxon>Gammaproteobacteria</taxon>
        <taxon>Alteromonadales</taxon>
        <taxon>Shewanellaceae</taxon>
        <taxon>Shewanella</taxon>
    </lineage>
</organism>
<evidence type="ECO:0000255" key="1">
    <source>
        <dbReference type="HAMAP-Rule" id="MF_00580"/>
    </source>
</evidence>
<name>CH10_SHESH</name>
<accession>A8FQY0</accession>
<proteinExistence type="inferred from homology"/>
<keyword id="KW-0143">Chaperone</keyword>
<keyword id="KW-0963">Cytoplasm</keyword>
<keyword id="KW-1185">Reference proteome</keyword>
<sequence>MNIRPLHDRVIVKRSEVESKSAGGIVLTGSAAEQSSRGEVLAVGNGRILENGSVQPLDVKVGDIVIFNEGYGVKKEKIDGEEVLILSESDLMAVVS</sequence>